<comment type="function">
    <text evidence="1">Is the main repressor of the genes involved in the de novo synthesis of purine nucleotides, regulating purB, purC, purEK, purF, purHD, purL, purMN and guaBA expression. PurR is allosterically activated to bind its cognate DNA by binding the purine corepressors, hypoxanthine or guanine, thereby effecting transcription repression.</text>
</comment>
<comment type="pathway">
    <text>Purine metabolism; purine nucleotide biosynthesis [regulation].</text>
</comment>
<comment type="subunit">
    <text evidence="1">Homodimer.</text>
</comment>
<comment type="domain">
    <text evidence="1">Consists of two structural and functional domains: an N-terminal DNA-binding domain, approximately the first 60 residues, and a larger C-terminal domain, approximately 280 residues, which imparts the function of corepressor binding and oligomerization.</text>
</comment>
<feature type="chain" id="PRO_0000279670" description="HTH-type transcriptional repressor PurR">
    <location>
        <begin position="1"/>
        <end position="341"/>
    </location>
</feature>
<feature type="domain" description="HTH lacI-type" evidence="1">
    <location>
        <begin position="2"/>
        <end position="56"/>
    </location>
</feature>
<feature type="DNA-binding region" description="H-T-H motif" evidence="1">
    <location>
        <begin position="4"/>
        <end position="23"/>
    </location>
</feature>
<feature type="DNA-binding region" evidence="1">
    <location>
        <begin position="48"/>
        <end position="56"/>
    </location>
</feature>
<feature type="binding site" evidence="1">
    <location>
        <position position="73"/>
    </location>
    <ligand>
        <name>hypoxanthine</name>
        <dbReference type="ChEBI" id="CHEBI:17368"/>
    </ligand>
</feature>
<feature type="binding site" evidence="1">
    <location>
        <position position="190"/>
    </location>
    <ligand>
        <name>hypoxanthine</name>
        <dbReference type="ChEBI" id="CHEBI:17368"/>
    </ligand>
</feature>
<feature type="binding site" evidence="1">
    <location>
        <position position="192"/>
    </location>
    <ligand>
        <name>hypoxanthine</name>
        <dbReference type="ChEBI" id="CHEBI:17368"/>
    </ligand>
</feature>
<feature type="binding site" evidence="1">
    <location>
        <position position="221"/>
    </location>
    <ligand>
        <name>hypoxanthine</name>
        <dbReference type="ChEBI" id="CHEBI:17368"/>
    </ligand>
</feature>
<feature type="binding site" evidence="1">
    <location>
        <position position="275"/>
    </location>
    <ligand>
        <name>hypoxanthine</name>
        <dbReference type="ChEBI" id="CHEBI:17368"/>
    </ligand>
</feature>
<organism>
    <name type="scientific">Shigella flexneri serotype 5b (strain 8401)</name>
    <dbReference type="NCBI Taxonomy" id="373384"/>
    <lineage>
        <taxon>Bacteria</taxon>
        <taxon>Pseudomonadati</taxon>
        <taxon>Pseudomonadota</taxon>
        <taxon>Gammaproteobacteria</taxon>
        <taxon>Enterobacterales</taxon>
        <taxon>Enterobacteriaceae</taxon>
        <taxon>Shigella</taxon>
    </lineage>
</organism>
<accession>Q0T4B4</accession>
<keyword id="KW-0238">DNA-binding</keyword>
<keyword id="KW-0658">Purine biosynthesis</keyword>
<keyword id="KW-0678">Repressor</keyword>
<keyword id="KW-0804">Transcription</keyword>
<keyword id="KW-0805">Transcription regulation</keyword>
<dbReference type="EMBL" id="CP000266">
    <property type="protein sequence ID" value="ABF03851.1"/>
    <property type="molecule type" value="Genomic_DNA"/>
</dbReference>
<dbReference type="RefSeq" id="WP_000190982.1">
    <property type="nucleotide sequence ID" value="NC_008258.1"/>
</dbReference>
<dbReference type="SMR" id="Q0T4B4"/>
<dbReference type="GeneID" id="75204504"/>
<dbReference type="KEGG" id="sfv:SFV_1680"/>
<dbReference type="HOGENOM" id="CLU_037628_6_2_6"/>
<dbReference type="UniPathway" id="UPA00488"/>
<dbReference type="Proteomes" id="UP000000659">
    <property type="component" value="Chromosome"/>
</dbReference>
<dbReference type="GO" id="GO:0003700">
    <property type="term" value="F:DNA-binding transcription factor activity"/>
    <property type="evidence" value="ECO:0007669"/>
    <property type="project" value="TreeGrafter"/>
</dbReference>
<dbReference type="GO" id="GO:0000976">
    <property type="term" value="F:transcription cis-regulatory region binding"/>
    <property type="evidence" value="ECO:0007669"/>
    <property type="project" value="TreeGrafter"/>
</dbReference>
<dbReference type="GO" id="GO:0045892">
    <property type="term" value="P:negative regulation of DNA-templated transcription"/>
    <property type="evidence" value="ECO:0007669"/>
    <property type="project" value="UniProtKB-UniRule"/>
</dbReference>
<dbReference type="GO" id="GO:0006164">
    <property type="term" value="P:purine nucleotide biosynthetic process"/>
    <property type="evidence" value="ECO:0007669"/>
    <property type="project" value="UniProtKB-UniPathway"/>
</dbReference>
<dbReference type="CDD" id="cd01392">
    <property type="entry name" value="HTH_LacI"/>
    <property type="match status" value="1"/>
</dbReference>
<dbReference type="CDD" id="cd06275">
    <property type="entry name" value="PBP1_PurR"/>
    <property type="match status" value="1"/>
</dbReference>
<dbReference type="FunFam" id="1.10.260.40:FF:000002">
    <property type="entry name" value="HTH-type transcriptional repressor PurR"/>
    <property type="match status" value="1"/>
</dbReference>
<dbReference type="FunFam" id="3.40.50.2300:FF:000045">
    <property type="entry name" value="HTH-type transcriptional repressor PurR"/>
    <property type="match status" value="1"/>
</dbReference>
<dbReference type="Gene3D" id="3.40.50.2300">
    <property type="match status" value="2"/>
</dbReference>
<dbReference type="Gene3D" id="1.10.260.40">
    <property type="entry name" value="lambda repressor-like DNA-binding domains"/>
    <property type="match status" value="1"/>
</dbReference>
<dbReference type="HAMAP" id="MF_01277">
    <property type="entry name" value="HTH_type_PurR"/>
    <property type="match status" value="1"/>
</dbReference>
<dbReference type="InterPro" id="IPR000843">
    <property type="entry name" value="HTH_LacI"/>
</dbReference>
<dbReference type="InterPro" id="IPR046335">
    <property type="entry name" value="LacI/GalR-like_sensor"/>
</dbReference>
<dbReference type="InterPro" id="IPR010982">
    <property type="entry name" value="Lambda_DNA-bd_dom_sf"/>
</dbReference>
<dbReference type="InterPro" id="IPR028082">
    <property type="entry name" value="Peripla_BP_I"/>
</dbReference>
<dbReference type="InterPro" id="IPR023588">
    <property type="entry name" value="Tscrpt_reg_HTH_PurR"/>
</dbReference>
<dbReference type="NCBIfam" id="NF007979">
    <property type="entry name" value="PRK10703.1"/>
    <property type="match status" value="1"/>
</dbReference>
<dbReference type="PANTHER" id="PTHR30146:SF148">
    <property type="entry name" value="HTH-TYPE TRANSCRIPTIONAL REPRESSOR PURR-RELATED"/>
    <property type="match status" value="1"/>
</dbReference>
<dbReference type="PANTHER" id="PTHR30146">
    <property type="entry name" value="LACI-RELATED TRANSCRIPTIONAL REPRESSOR"/>
    <property type="match status" value="1"/>
</dbReference>
<dbReference type="Pfam" id="PF00356">
    <property type="entry name" value="LacI"/>
    <property type="match status" value="1"/>
</dbReference>
<dbReference type="Pfam" id="PF13377">
    <property type="entry name" value="Peripla_BP_3"/>
    <property type="match status" value="1"/>
</dbReference>
<dbReference type="PRINTS" id="PR00036">
    <property type="entry name" value="HTHLACI"/>
</dbReference>
<dbReference type="SMART" id="SM00354">
    <property type="entry name" value="HTH_LACI"/>
    <property type="match status" value="1"/>
</dbReference>
<dbReference type="SUPFAM" id="SSF47413">
    <property type="entry name" value="lambda repressor-like DNA-binding domains"/>
    <property type="match status" value="1"/>
</dbReference>
<dbReference type="SUPFAM" id="SSF53822">
    <property type="entry name" value="Periplasmic binding protein-like I"/>
    <property type="match status" value="1"/>
</dbReference>
<dbReference type="PROSITE" id="PS00356">
    <property type="entry name" value="HTH_LACI_1"/>
    <property type="match status" value="1"/>
</dbReference>
<dbReference type="PROSITE" id="PS50932">
    <property type="entry name" value="HTH_LACI_2"/>
    <property type="match status" value="1"/>
</dbReference>
<name>PURR_SHIF8</name>
<reference key="1">
    <citation type="journal article" date="2006" name="BMC Genomics">
        <title>Complete genome sequence of Shigella flexneri 5b and comparison with Shigella flexneri 2a.</title>
        <authorList>
            <person name="Nie H."/>
            <person name="Yang F."/>
            <person name="Zhang X."/>
            <person name="Yang J."/>
            <person name="Chen L."/>
            <person name="Wang J."/>
            <person name="Xiong Z."/>
            <person name="Peng J."/>
            <person name="Sun L."/>
            <person name="Dong J."/>
            <person name="Xue Y."/>
            <person name="Xu X."/>
            <person name="Chen S."/>
            <person name="Yao Z."/>
            <person name="Shen Y."/>
            <person name="Jin Q."/>
        </authorList>
    </citation>
    <scope>NUCLEOTIDE SEQUENCE [LARGE SCALE GENOMIC DNA]</scope>
    <source>
        <strain>8401</strain>
    </source>
</reference>
<proteinExistence type="inferred from homology"/>
<evidence type="ECO:0000255" key="1">
    <source>
        <dbReference type="HAMAP-Rule" id="MF_01277"/>
    </source>
</evidence>
<sequence>MATIKDVAKRANVSTTTVSHVINKTRFVAEETRNAVWAAIKELHYSPSAVARSLKVNHTKSIGLLATSSEAAYFAEIIEAVEKNCFQKGYTLILGNAWNNLEKQRAYLSMMAQKRVDGLLVMCSEYPEPLLAMLEEYRHIPMVVMDWGEAKADFTDAVIDNAFEGGYMAGRYLIERGHREIGVIPGPLERNTGAGRLAGFMKAMEEAMIKVPESWIVQGDFEPESGYRAMQQILSQPHRPTAVFCGGDIMAMGALCAADEMGLRVPQDVSLIGYDNVRNARYFTPALTTIHQPKDSLGETAFNMLLDRIVNKREEPQSIEVHPRLIERRSVADGPFRDYRR</sequence>
<protein>
    <recommendedName>
        <fullName evidence="1">HTH-type transcriptional repressor PurR</fullName>
    </recommendedName>
    <alternativeName>
        <fullName evidence="1">Pur regulon repressor</fullName>
    </alternativeName>
    <alternativeName>
        <fullName evidence="1">Purine nucleotide synthesis repressor</fullName>
    </alternativeName>
</protein>
<gene>
    <name evidence="1" type="primary">purR</name>
    <name type="ordered locus">SFV_1680</name>
</gene>